<evidence type="ECO:0000255" key="1">
    <source>
        <dbReference type="HAMAP-Rule" id="MF_00050"/>
    </source>
</evidence>
<dbReference type="EMBL" id="AM946015">
    <property type="protein sequence ID" value="CAR43724.1"/>
    <property type="molecule type" value="Genomic_DNA"/>
</dbReference>
<dbReference type="RefSeq" id="WP_015912046.1">
    <property type="nucleotide sequence ID" value="NC_012004.1"/>
</dbReference>
<dbReference type="SMR" id="B9DW42"/>
<dbReference type="STRING" id="218495.SUB1755"/>
<dbReference type="KEGG" id="sub:SUB1755"/>
<dbReference type="eggNOG" id="COG0264">
    <property type="taxonomic scope" value="Bacteria"/>
</dbReference>
<dbReference type="HOGENOM" id="CLU_047155_0_1_9"/>
<dbReference type="OrthoDB" id="9808348at2"/>
<dbReference type="Proteomes" id="UP000000449">
    <property type="component" value="Chromosome"/>
</dbReference>
<dbReference type="GO" id="GO:0005737">
    <property type="term" value="C:cytoplasm"/>
    <property type="evidence" value="ECO:0007669"/>
    <property type="project" value="UniProtKB-SubCell"/>
</dbReference>
<dbReference type="GO" id="GO:0003746">
    <property type="term" value="F:translation elongation factor activity"/>
    <property type="evidence" value="ECO:0007669"/>
    <property type="project" value="UniProtKB-UniRule"/>
</dbReference>
<dbReference type="CDD" id="cd14275">
    <property type="entry name" value="UBA_EF-Ts"/>
    <property type="match status" value="1"/>
</dbReference>
<dbReference type="FunFam" id="1.10.286.20:FF:000004">
    <property type="entry name" value="Elongation factor Ts"/>
    <property type="match status" value="1"/>
</dbReference>
<dbReference type="FunFam" id="1.10.8.10:FF:000001">
    <property type="entry name" value="Elongation factor Ts"/>
    <property type="match status" value="1"/>
</dbReference>
<dbReference type="FunFam" id="3.30.479.20:FF:000013">
    <property type="entry name" value="Elongation factor Ts"/>
    <property type="match status" value="1"/>
</dbReference>
<dbReference type="Gene3D" id="1.10.286.20">
    <property type="match status" value="1"/>
</dbReference>
<dbReference type="Gene3D" id="1.10.8.10">
    <property type="entry name" value="DNA helicase RuvA subunit, C-terminal domain"/>
    <property type="match status" value="1"/>
</dbReference>
<dbReference type="Gene3D" id="3.30.479.20">
    <property type="entry name" value="Elongation factor Ts, dimerisation domain"/>
    <property type="match status" value="3"/>
</dbReference>
<dbReference type="HAMAP" id="MF_00050">
    <property type="entry name" value="EF_Ts"/>
    <property type="match status" value="1"/>
</dbReference>
<dbReference type="InterPro" id="IPR036402">
    <property type="entry name" value="EF-Ts_dimer_sf"/>
</dbReference>
<dbReference type="InterPro" id="IPR001816">
    <property type="entry name" value="Transl_elong_EFTs/EF1B"/>
</dbReference>
<dbReference type="InterPro" id="IPR014039">
    <property type="entry name" value="Transl_elong_EFTs/EF1B_dimer"/>
</dbReference>
<dbReference type="InterPro" id="IPR018101">
    <property type="entry name" value="Transl_elong_Ts_CS"/>
</dbReference>
<dbReference type="InterPro" id="IPR009060">
    <property type="entry name" value="UBA-like_sf"/>
</dbReference>
<dbReference type="NCBIfam" id="TIGR00116">
    <property type="entry name" value="tsf"/>
    <property type="match status" value="1"/>
</dbReference>
<dbReference type="PANTHER" id="PTHR11741">
    <property type="entry name" value="ELONGATION FACTOR TS"/>
    <property type="match status" value="1"/>
</dbReference>
<dbReference type="PANTHER" id="PTHR11741:SF0">
    <property type="entry name" value="ELONGATION FACTOR TS, MITOCHONDRIAL"/>
    <property type="match status" value="1"/>
</dbReference>
<dbReference type="Pfam" id="PF00889">
    <property type="entry name" value="EF_TS"/>
    <property type="match status" value="2"/>
</dbReference>
<dbReference type="SUPFAM" id="SSF54713">
    <property type="entry name" value="Elongation factor Ts (EF-Ts), dimerisation domain"/>
    <property type="match status" value="1"/>
</dbReference>
<dbReference type="SUPFAM" id="SSF46934">
    <property type="entry name" value="UBA-like"/>
    <property type="match status" value="1"/>
</dbReference>
<dbReference type="PROSITE" id="PS01126">
    <property type="entry name" value="EF_TS_1"/>
    <property type="match status" value="1"/>
</dbReference>
<dbReference type="PROSITE" id="PS01127">
    <property type="entry name" value="EF_TS_2"/>
    <property type="match status" value="1"/>
</dbReference>
<proteinExistence type="inferred from homology"/>
<accession>B9DW42</accession>
<organism>
    <name type="scientific">Streptococcus uberis (strain ATCC BAA-854 / 0140J)</name>
    <dbReference type="NCBI Taxonomy" id="218495"/>
    <lineage>
        <taxon>Bacteria</taxon>
        <taxon>Bacillati</taxon>
        <taxon>Bacillota</taxon>
        <taxon>Bacilli</taxon>
        <taxon>Lactobacillales</taxon>
        <taxon>Streptococcaceae</taxon>
        <taxon>Streptococcus</taxon>
    </lineage>
</organism>
<name>EFTS_STRU0</name>
<gene>
    <name evidence="1" type="primary">tsf</name>
    <name type="ordered locus">SUB1755</name>
</gene>
<reference key="1">
    <citation type="journal article" date="2009" name="BMC Genomics">
        <title>Evidence for niche adaptation in the genome of the bovine pathogen Streptococcus uberis.</title>
        <authorList>
            <person name="Ward P.N."/>
            <person name="Holden M.T.G."/>
            <person name="Leigh J.A."/>
            <person name="Lennard N."/>
            <person name="Bignell A."/>
            <person name="Barron A."/>
            <person name="Clark L."/>
            <person name="Quail M.A."/>
            <person name="Woodward J."/>
            <person name="Barrell B.G."/>
            <person name="Egan S.A."/>
            <person name="Field T.R."/>
            <person name="Maskell D."/>
            <person name="Kehoe M."/>
            <person name="Dowson C.G."/>
            <person name="Chanter N."/>
            <person name="Whatmore A.M."/>
            <person name="Bentley S.D."/>
            <person name="Parkhill J."/>
        </authorList>
    </citation>
    <scope>NUCLEOTIDE SEQUENCE [LARGE SCALE GENOMIC DNA]</scope>
    <source>
        <strain>ATCC BAA-854 / 0140J</strain>
    </source>
</reference>
<sequence length="346" mass="37529">MAEITAKLVKELREKSGAGVMDAKKALVETDGDMDKAIELLREKGMAKAAKKADRVAAEGLTGVYVSGNYAAVVEVNAETDFVAKNAQFVELVNDTAKTIAEGKPANNEEALNLIMPSGETLAAAYVNATATIGEKISFRRFSLLEKTDEQHFGAYQHNGGRIGVISVIEGGDDALAKQVSMHIAAMKPTVLSYTELDPQFVKDELAKLNHNIELDNESRAMVDKAPLPFLQYGSKAQLSEDVIAKAEEDIKAELAAEGKPEKIWDKIIPGKMDRFMLDNTKVDQAYTLLAQVYIMDDSKTVEAYLDSVNAKAIAFARFEVGEGIEKKANDFESEVAATMAAALNN</sequence>
<keyword id="KW-0963">Cytoplasm</keyword>
<keyword id="KW-0251">Elongation factor</keyword>
<keyword id="KW-0648">Protein biosynthesis</keyword>
<keyword id="KW-1185">Reference proteome</keyword>
<comment type="function">
    <text evidence="1">Associates with the EF-Tu.GDP complex and induces the exchange of GDP to GTP. It remains bound to the aminoacyl-tRNA.EF-Tu.GTP complex up to the GTP hydrolysis stage on the ribosome.</text>
</comment>
<comment type="subcellular location">
    <subcellularLocation>
        <location evidence="1">Cytoplasm</location>
    </subcellularLocation>
</comment>
<comment type="similarity">
    <text evidence="1">Belongs to the EF-Ts family.</text>
</comment>
<feature type="chain" id="PRO_1000189887" description="Elongation factor Ts">
    <location>
        <begin position="1"/>
        <end position="346"/>
    </location>
</feature>
<feature type="region of interest" description="Involved in Mg(2+) ion dislocation from EF-Tu" evidence="1">
    <location>
        <begin position="80"/>
        <end position="83"/>
    </location>
</feature>
<protein>
    <recommendedName>
        <fullName evidence="1">Elongation factor Ts</fullName>
        <shortName evidence="1">EF-Ts</shortName>
    </recommendedName>
</protein>